<comment type="function">
    <text evidence="1">Component of the eukaryotic translation initiation factor 3 (eIF-3) complex, which is involved in protein synthesis of a specialized repertoire of mRNAs and, together with other initiation factors, stimulates binding of mRNA and methionyl-tRNAi to the 40S ribosome. The eIF-3 complex specifically targets and initiates translation of a subset of mRNAs involved in cell proliferation.</text>
</comment>
<comment type="subunit">
    <text evidence="1">Component of the eukaryotic translation initiation factor 3 (eIF-3) complex. The eIF-3 complex interacts with pix.</text>
</comment>
<comment type="subcellular location">
    <subcellularLocation>
        <location evidence="1">Cytoplasm</location>
    </subcellularLocation>
</comment>
<comment type="similarity">
    <text evidence="1">Belongs to the eIF-3 subunit J family.</text>
</comment>
<accession>B4LN42</accession>
<keyword id="KW-0175">Coiled coil</keyword>
<keyword id="KW-0963">Cytoplasm</keyword>
<keyword id="KW-0396">Initiation factor</keyword>
<keyword id="KW-0648">Protein biosynthesis</keyword>
<keyword id="KW-1185">Reference proteome</keyword>
<sequence>MADDWESAADSEIVIRPNATNNINKWEGEDDDEDVKESWEDEEEKKDEEKPTKTEAPVKTKPNKALKAKLEEQERLNEEEERKRLANMTAEEKLAEKLRLQKIQEESDLKSALDTFGVTSIGGGLDAFNPQSKEEFKEFGATLSWKVAQYRESVHFPEFIEDLVRSLCVNLSAADIKKVKMSVESLHSEKQKMEKANAKKSAAKAKGKVSLRKESDDIDDYQKYGNDFTDDYDDFM</sequence>
<name>EIF3J_DROVI</name>
<gene>
    <name evidence="1" type="primary">eIF3j</name>
    <name evidence="1" type="synonym">Adam</name>
    <name type="ORF">GJ21266</name>
</gene>
<evidence type="ECO:0000255" key="1">
    <source>
        <dbReference type="HAMAP-Rule" id="MF_03009"/>
    </source>
</evidence>
<evidence type="ECO:0000256" key="2">
    <source>
        <dbReference type="SAM" id="MobiDB-lite"/>
    </source>
</evidence>
<dbReference type="EMBL" id="CH940648">
    <property type="protein sequence ID" value="EDW60046.1"/>
    <property type="molecule type" value="Genomic_DNA"/>
</dbReference>
<dbReference type="RefSeq" id="XP_002048853.1">
    <property type="nucleotide sequence ID" value="XM_002048817.4"/>
</dbReference>
<dbReference type="SMR" id="B4LN42"/>
<dbReference type="FunCoup" id="B4LN42">
    <property type="interactions" value="1612"/>
</dbReference>
<dbReference type="STRING" id="7244.B4LN42"/>
<dbReference type="EnsemblMetazoa" id="FBtr0237191">
    <property type="protein sequence ID" value="FBpp0235683"/>
    <property type="gene ID" value="FBgn0208399"/>
</dbReference>
<dbReference type="EnsemblMetazoa" id="XM_002048817.3">
    <property type="protein sequence ID" value="XP_002048853.1"/>
    <property type="gene ID" value="LOC6626063"/>
</dbReference>
<dbReference type="GeneID" id="6626063"/>
<dbReference type="KEGG" id="dvi:6626063"/>
<dbReference type="CTD" id="8669"/>
<dbReference type="eggNOG" id="KOG4813">
    <property type="taxonomic scope" value="Eukaryota"/>
</dbReference>
<dbReference type="HOGENOM" id="CLU_085806_2_0_1"/>
<dbReference type="InParanoid" id="B4LN42"/>
<dbReference type="OMA" id="KPHYALW"/>
<dbReference type="OrthoDB" id="20381at2759"/>
<dbReference type="PhylomeDB" id="B4LN42"/>
<dbReference type="ChiTaRS" id="Adam">
    <property type="organism name" value="fly"/>
</dbReference>
<dbReference type="Proteomes" id="UP000008792">
    <property type="component" value="Unassembled WGS sequence"/>
</dbReference>
<dbReference type="GO" id="GO:0016282">
    <property type="term" value="C:eukaryotic 43S preinitiation complex"/>
    <property type="evidence" value="ECO:0007669"/>
    <property type="project" value="UniProtKB-UniRule"/>
</dbReference>
<dbReference type="GO" id="GO:0033290">
    <property type="term" value="C:eukaryotic 48S preinitiation complex"/>
    <property type="evidence" value="ECO:0007669"/>
    <property type="project" value="UniProtKB-UniRule"/>
</dbReference>
<dbReference type="GO" id="GO:0005852">
    <property type="term" value="C:eukaryotic translation initiation factor 3 complex"/>
    <property type="evidence" value="ECO:0007669"/>
    <property type="project" value="UniProtKB-UniRule"/>
</dbReference>
<dbReference type="GO" id="GO:0003743">
    <property type="term" value="F:translation initiation factor activity"/>
    <property type="evidence" value="ECO:0007669"/>
    <property type="project" value="UniProtKB-UniRule"/>
</dbReference>
<dbReference type="GO" id="GO:0001732">
    <property type="term" value="P:formation of cytoplasmic translation initiation complex"/>
    <property type="evidence" value="ECO:0007669"/>
    <property type="project" value="UniProtKB-UniRule"/>
</dbReference>
<dbReference type="GO" id="GO:0006446">
    <property type="term" value="P:regulation of translational initiation"/>
    <property type="evidence" value="ECO:0007669"/>
    <property type="project" value="EnsemblMetazoa"/>
</dbReference>
<dbReference type="Gene3D" id="1.10.246.60">
    <property type="entry name" value="Eukaryotic translation initiation factor 3 like domains"/>
    <property type="match status" value="1"/>
</dbReference>
<dbReference type="HAMAP" id="MF_03009">
    <property type="entry name" value="eIF3j"/>
    <property type="match status" value="1"/>
</dbReference>
<dbReference type="InterPro" id="IPR023194">
    <property type="entry name" value="eIF3-like_dom_sf"/>
</dbReference>
<dbReference type="InterPro" id="IPR013906">
    <property type="entry name" value="eIF3j"/>
</dbReference>
<dbReference type="PANTHER" id="PTHR21681">
    <property type="entry name" value="EUKARYOTIC TRANSLATION INITIATION FACTOR 3 SUBUNIT J"/>
    <property type="match status" value="1"/>
</dbReference>
<dbReference type="PANTHER" id="PTHR21681:SF0">
    <property type="entry name" value="EUKARYOTIC TRANSLATION INITIATION FACTOR 3 SUBUNIT J"/>
    <property type="match status" value="1"/>
</dbReference>
<dbReference type="Pfam" id="PF08597">
    <property type="entry name" value="eIF3_subunit"/>
    <property type="match status" value="1"/>
</dbReference>
<protein>
    <recommendedName>
        <fullName evidence="1">Eukaryotic translation initiation factor 3 subunit J</fullName>
        <shortName evidence="1">eIF3j</shortName>
    </recommendedName>
</protein>
<proteinExistence type="inferred from homology"/>
<reference key="1">
    <citation type="journal article" date="2007" name="Nature">
        <title>Evolution of genes and genomes on the Drosophila phylogeny.</title>
        <authorList>
            <consortium name="Drosophila 12 genomes consortium"/>
        </authorList>
    </citation>
    <scope>NUCLEOTIDE SEQUENCE [LARGE SCALE GENOMIC DNA]</scope>
    <source>
        <strain>Tucson 15010-1051.87</strain>
    </source>
</reference>
<organism>
    <name type="scientific">Drosophila virilis</name>
    <name type="common">Fruit fly</name>
    <dbReference type="NCBI Taxonomy" id="7244"/>
    <lineage>
        <taxon>Eukaryota</taxon>
        <taxon>Metazoa</taxon>
        <taxon>Ecdysozoa</taxon>
        <taxon>Arthropoda</taxon>
        <taxon>Hexapoda</taxon>
        <taxon>Insecta</taxon>
        <taxon>Pterygota</taxon>
        <taxon>Neoptera</taxon>
        <taxon>Endopterygota</taxon>
        <taxon>Diptera</taxon>
        <taxon>Brachycera</taxon>
        <taxon>Muscomorpha</taxon>
        <taxon>Ephydroidea</taxon>
        <taxon>Drosophilidae</taxon>
        <taxon>Drosophila</taxon>
    </lineage>
</organism>
<feature type="chain" id="PRO_0000365141" description="Eukaryotic translation initiation factor 3 subunit J">
    <location>
        <begin position="1"/>
        <end position="236"/>
    </location>
</feature>
<feature type="region of interest" description="Disordered" evidence="2">
    <location>
        <begin position="1"/>
        <end position="88"/>
    </location>
</feature>
<feature type="region of interest" description="Disordered" evidence="2">
    <location>
        <begin position="188"/>
        <end position="236"/>
    </location>
</feature>
<feature type="coiled-coil region" evidence="1">
    <location>
        <begin position="61"/>
        <end position="112"/>
    </location>
</feature>
<feature type="coiled-coil region" evidence="1">
    <location>
        <begin position="174"/>
        <end position="209"/>
    </location>
</feature>
<feature type="compositionally biased region" description="Acidic residues" evidence="2">
    <location>
        <begin position="28"/>
        <end position="46"/>
    </location>
</feature>
<feature type="compositionally biased region" description="Basic and acidic residues" evidence="2">
    <location>
        <begin position="47"/>
        <end position="58"/>
    </location>
</feature>
<feature type="compositionally biased region" description="Basic and acidic residues" evidence="2">
    <location>
        <begin position="68"/>
        <end position="88"/>
    </location>
</feature>
<feature type="compositionally biased region" description="Basic and acidic residues" evidence="2">
    <location>
        <begin position="188"/>
        <end position="197"/>
    </location>
</feature>
<feature type="compositionally biased region" description="Basic residues" evidence="2">
    <location>
        <begin position="201"/>
        <end position="210"/>
    </location>
</feature>